<proteinExistence type="evidence at transcript level"/>
<keyword id="KW-0204">Cytolysis</keyword>
<keyword id="KW-1061">Dermonecrotic toxin</keyword>
<keyword id="KW-1015">Disulfide bond</keyword>
<keyword id="KW-0325">Glycoprotein</keyword>
<keyword id="KW-0354">Hemolysis</keyword>
<keyword id="KW-0442">Lipid degradation</keyword>
<keyword id="KW-0443">Lipid metabolism</keyword>
<keyword id="KW-0456">Lyase</keyword>
<keyword id="KW-0460">Magnesium</keyword>
<keyword id="KW-0479">Metal-binding</keyword>
<keyword id="KW-0964">Secreted</keyword>
<keyword id="KW-0800">Toxin</keyword>
<reference key="1">
    <citation type="journal article" date="2009" name="Mol. Biol. Evol.">
        <title>Molecular evolution, functional variation, and proposed nomenclature of the gene family that includes sphingomyelinase D in sicariid spider venoms.</title>
        <authorList>
            <person name="Binford G.J."/>
            <person name="Bodner M.R."/>
            <person name="Cordes M.H."/>
            <person name="Baldwin K.L."/>
            <person name="Rynerson M.R."/>
            <person name="Burns S.N."/>
            <person name="Zobel-Thropp P.A."/>
        </authorList>
    </citation>
    <scope>NUCLEOTIDE SEQUENCE [MRNA]</scope>
    <scope>NOMENCLATURE</scope>
    <source>
        <tissue>Venom gland</tissue>
    </source>
</reference>
<sequence length="273" mass="30475">WIMGHMVNAIAQIDEFVNLGANSIETDVSFDDSANPEYTYHGVPCDCGRTCTKWEYFNEFLKGLRKATTPGDSKYHEKLVLVVFDLKTSSLYDNQASDAGKKLAKSLLQNYWNNGNNGGRAYIVLSIPNLAHYKLIAGFKETLTSEGHPELMDKVGYDFSGNDEIGDVAKTYKKAGVTGHVWQSDGITNCLLRGLDRVRKAVANRDSSNGYINKVYYWTVDKRATTRDALDAGVDGIMTNYPDVIAGVLNESAYKAKFRIASYDDNPWETFKN</sequence>
<protein>
    <recommendedName>
        <fullName evidence="7">Dermonecrotic toxin LdSicTox-alphaIB1avi</fullName>
        <ecNumber evidence="4">4.6.1.-</ecNumber>
    </recommendedName>
    <alternativeName>
        <fullName>Phospholipase D</fullName>
        <shortName>PLD</shortName>
    </alternativeName>
    <alternativeName>
        <fullName>Sphingomyelin phosphodiesterase D</fullName>
        <shortName>SMD</shortName>
        <shortName>SMase D</shortName>
        <shortName>Sphingomyelinase D</shortName>
    </alternativeName>
</protein>
<accession>C0JAX1</accession>
<comment type="function">
    <text evidence="1 3">Dermonecrotic toxins cleave the phosphodiester linkage between the phosphate and headgroup of certain phospholipids (sphingolipid and lysolipid substrates), forming an alcohol (often choline) and a cyclic phosphate (By similarity). This toxin acts on sphingomyelin (SM) (By similarity). It may also act on ceramide phosphoethanolamine (CPE), lysophosphatidylcholine (LPC) and lysophosphatidylethanolamine (LPE), but not on lysophosphatidylserine (LPS), and lysophosphatidylglycerol (LPG) (By similarity). It acts by transphosphatidylation, releasing exclusively cyclic phosphate products as second products (By similarity). Induces dermonecrosis, hemolysis, increased vascular permeability, edema, inflammatory response, and platelet aggregation (By similarity).</text>
</comment>
<comment type="catalytic activity">
    <reaction evidence="1">
        <text>an N-(acyl)-sphingosylphosphocholine = an N-(acyl)-sphingosyl-1,3-cyclic phosphate + choline</text>
        <dbReference type="Rhea" id="RHEA:60652"/>
        <dbReference type="ChEBI" id="CHEBI:15354"/>
        <dbReference type="ChEBI" id="CHEBI:64583"/>
        <dbReference type="ChEBI" id="CHEBI:143892"/>
    </reaction>
</comment>
<comment type="catalytic activity">
    <reaction evidence="1">
        <text>an N-(acyl)-sphingosylphosphoethanolamine = an N-(acyl)-sphingosyl-1,3-cyclic phosphate + ethanolamine</text>
        <dbReference type="Rhea" id="RHEA:60648"/>
        <dbReference type="ChEBI" id="CHEBI:57603"/>
        <dbReference type="ChEBI" id="CHEBI:143891"/>
        <dbReference type="ChEBI" id="CHEBI:143892"/>
    </reaction>
</comment>
<comment type="catalytic activity">
    <reaction evidence="1">
        <text>a 1-acyl-sn-glycero-3-phosphocholine = a 1-acyl-sn-glycero-2,3-cyclic phosphate + choline</text>
        <dbReference type="Rhea" id="RHEA:60700"/>
        <dbReference type="ChEBI" id="CHEBI:15354"/>
        <dbReference type="ChEBI" id="CHEBI:58168"/>
        <dbReference type="ChEBI" id="CHEBI:143947"/>
    </reaction>
</comment>
<comment type="catalytic activity">
    <reaction evidence="1">
        <text>a 1-acyl-sn-glycero-3-phosphoethanolamine = a 1-acyl-sn-glycero-2,3-cyclic phosphate + ethanolamine</text>
        <dbReference type="Rhea" id="RHEA:60704"/>
        <dbReference type="ChEBI" id="CHEBI:57603"/>
        <dbReference type="ChEBI" id="CHEBI:64381"/>
        <dbReference type="ChEBI" id="CHEBI:143947"/>
    </reaction>
</comment>
<comment type="cofactor">
    <cofactor evidence="5">
        <name>Mg(2+)</name>
        <dbReference type="ChEBI" id="CHEBI:18420"/>
    </cofactor>
    <text evidence="5">Binds 1 Mg(2+) ion per subunit.</text>
</comment>
<comment type="subcellular location">
    <subcellularLocation>
        <location evidence="9">Secreted</location>
    </subcellularLocation>
</comment>
<comment type="tissue specificity">
    <text evidence="9">Expressed by the venom gland.</text>
</comment>
<comment type="similarity">
    <text evidence="8">Belongs to the arthropod phospholipase D family. Class II subfamily.</text>
</comment>
<comment type="caution">
    <text evidence="1 2 4">The most common activity assay for dermonecrotic toxins detects enzymatic activity by monitoring choline release from substrate. Liberation of choline from sphingomyelin (SM) or lysophosphatidylcholine (LPC) is commonly assumed to result from substrate hydrolysis, giving either ceramide-1-phosphate (C1P) or lysophosphatidic acid (LPA), respectively, as a second product. However, two studies from Lajoie and colleagues (2013 and 2015) report the observation of exclusive formation of cyclic phosphate products as second products, resulting from intramolecular transphosphatidylation. Cyclic phosphates have vastly different biological properties from their monoester counterparts, and they may be relevant to the pathology of brown spider envenomation.</text>
</comment>
<organism>
    <name type="scientific">Loxosceles deserta</name>
    <name type="common">Desert recluse spider</name>
    <dbReference type="NCBI Taxonomy" id="424440"/>
    <lineage>
        <taxon>Eukaryota</taxon>
        <taxon>Metazoa</taxon>
        <taxon>Ecdysozoa</taxon>
        <taxon>Arthropoda</taxon>
        <taxon>Chelicerata</taxon>
        <taxon>Arachnida</taxon>
        <taxon>Araneae</taxon>
        <taxon>Araneomorphae</taxon>
        <taxon>Haplogynae</taxon>
        <taxon>Scytodoidea</taxon>
        <taxon>Sicariidae</taxon>
        <taxon>Loxosceles</taxon>
    </lineage>
</organism>
<feature type="chain" id="PRO_0000392780" description="Dermonecrotic toxin LdSicTox-alphaIB1avi">
    <location>
        <begin position="1" status="less than"/>
        <end position="273"/>
    </location>
</feature>
<feature type="active site" evidence="5">
    <location>
        <position position="5"/>
    </location>
</feature>
<feature type="active site" description="Nucleophile" evidence="5">
    <location>
        <position position="41"/>
    </location>
</feature>
<feature type="binding site" evidence="5">
    <location>
        <position position="25"/>
    </location>
    <ligand>
        <name>Mg(2+)</name>
        <dbReference type="ChEBI" id="CHEBI:18420"/>
    </ligand>
</feature>
<feature type="binding site" evidence="5">
    <location>
        <position position="27"/>
    </location>
    <ligand>
        <name>Mg(2+)</name>
        <dbReference type="ChEBI" id="CHEBI:18420"/>
    </ligand>
</feature>
<feature type="binding site" evidence="5">
    <location>
        <position position="85"/>
    </location>
    <ligand>
        <name>Mg(2+)</name>
        <dbReference type="ChEBI" id="CHEBI:18420"/>
    </ligand>
</feature>
<feature type="glycosylation site" description="N-linked (GlcNAc...) asparagine" evidence="6">
    <location>
        <position position="250"/>
    </location>
</feature>
<feature type="disulfide bond" evidence="3">
    <location>
        <begin position="45"/>
        <end position="51"/>
    </location>
</feature>
<feature type="disulfide bond" evidence="3">
    <location>
        <begin position="47"/>
        <end position="190"/>
    </location>
</feature>
<feature type="non-terminal residue">
    <location>
        <position position="1"/>
    </location>
</feature>
<dbReference type="EC" id="4.6.1.-" evidence="4"/>
<dbReference type="EMBL" id="FJ171406">
    <property type="protein sequence ID" value="ACN48902.1"/>
    <property type="molecule type" value="mRNA"/>
</dbReference>
<dbReference type="SMR" id="C0JAX1"/>
<dbReference type="GO" id="GO:0005576">
    <property type="term" value="C:extracellular region"/>
    <property type="evidence" value="ECO:0007669"/>
    <property type="project" value="UniProtKB-SubCell"/>
</dbReference>
<dbReference type="GO" id="GO:0016829">
    <property type="term" value="F:lyase activity"/>
    <property type="evidence" value="ECO:0007669"/>
    <property type="project" value="UniProtKB-KW"/>
</dbReference>
<dbReference type="GO" id="GO:0046872">
    <property type="term" value="F:metal ion binding"/>
    <property type="evidence" value="ECO:0007669"/>
    <property type="project" value="UniProtKB-KW"/>
</dbReference>
<dbReference type="GO" id="GO:0008081">
    <property type="term" value="F:phosphoric diester hydrolase activity"/>
    <property type="evidence" value="ECO:0007669"/>
    <property type="project" value="InterPro"/>
</dbReference>
<dbReference type="GO" id="GO:0090729">
    <property type="term" value="F:toxin activity"/>
    <property type="evidence" value="ECO:0007669"/>
    <property type="project" value="UniProtKB-KW"/>
</dbReference>
<dbReference type="GO" id="GO:0031640">
    <property type="term" value="P:killing of cells of another organism"/>
    <property type="evidence" value="ECO:0007669"/>
    <property type="project" value="UniProtKB-KW"/>
</dbReference>
<dbReference type="GO" id="GO:0016042">
    <property type="term" value="P:lipid catabolic process"/>
    <property type="evidence" value="ECO:0007669"/>
    <property type="project" value="UniProtKB-KW"/>
</dbReference>
<dbReference type="CDD" id="cd08576">
    <property type="entry name" value="GDPD_like_SMaseD_PLD"/>
    <property type="match status" value="1"/>
</dbReference>
<dbReference type="Gene3D" id="3.20.20.190">
    <property type="entry name" value="Phosphatidylinositol (PI) phosphodiesterase"/>
    <property type="match status" value="1"/>
</dbReference>
<dbReference type="InterPro" id="IPR017946">
    <property type="entry name" value="PLC-like_Pdiesterase_TIM-brl"/>
</dbReference>
<dbReference type="Pfam" id="PF13653">
    <property type="entry name" value="GDPD_2"/>
    <property type="match status" value="1"/>
</dbReference>
<dbReference type="SUPFAM" id="SSF51695">
    <property type="entry name" value="PLC-like phosphodiesterases"/>
    <property type="match status" value="1"/>
</dbReference>
<name>A1KA6_LOXDE</name>
<evidence type="ECO:0000250" key="1">
    <source>
        <dbReference type="UniProtKB" id="A0A0D4WTV1"/>
    </source>
</evidence>
<evidence type="ECO:0000250" key="2">
    <source>
        <dbReference type="UniProtKB" id="A0A0D4WV12"/>
    </source>
</evidence>
<evidence type="ECO:0000250" key="3">
    <source>
        <dbReference type="UniProtKB" id="P0CE80"/>
    </source>
</evidence>
<evidence type="ECO:0000250" key="4">
    <source>
        <dbReference type="UniProtKB" id="Q4ZFU2"/>
    </source>
</evidence>
<evidence type="ECO:0000250" key="5">
    <source>
        <dbReference type="UniProtKB" id="Q8I914"/>
    </source>
</evidence>
<evidence type="ECO:0000255" key="6"/>
<evidence type="ECO:0000303" key="7">
    <source>
    </source>
</evidence>
<evidence type="ECO:0000305" key="8"/>
<evidence type="ECO:0000305" key="9">
    <source>
    </source>
</evidence>